<organism>
    <name type="scientific">Coxiella burnetii (strain RSA 493 / Nine Mile phase I)</name>
    <dbReference type="NCBI Taxonomy" id="227377"/>
    <lineage>
        <taxon>Bacteria</taxon>
        <taxon>Pseudomonadati</taxon>
        <taxon>Pseudomonadota</taxon>
        <taxon>Gammaproteobacteria</taxon>
        <taxon>Legionellales</taxon>
        <taxon>Coxiellaceae</taxon>
        <taxon>Coxiella</taxon>
    </lineage>
</organism>
<proteinExistence type="inferred from homology"/>
<protein>
    <recommendedName>
        <fullName evidence="1">Peptide deformylase 2</fullName>
        <shortName evidence="1">PDF 2</shortName>
        <ecNumber evidence="1">3.5.1.88</ecNumber>
    </recommendedName>
    <alternativeName>
        <fullName evidence="1">Polypeptide deformylase 2</fullName>
    </alternativeName>
</protein>
<sequence>MKIVTTDSENKAVLYKVASEVEIPLTKTTKEKIEAMRIFYKSFQGKAGFAVPQVGLSERIILVEQHLFDTTMAEETDEPTILVNPSWRPISDKKEWDIEGCLSVPGKVGVVERYVHVELTAWLYHSDTEALSKIKREYHREYSSVLWQHEIDHLEGKIYVDKAKLLLNEKDFYSFRQQLIESGKIQSGMALFDLGPLIYDIVVKGEIPS</sequence>
<gene>
    <name evidence="1" type="primary">def2</name>
    <name type="ordered locus">CBU_1879</name>
</gene>
<dbReference type="EC" id="3.5.1.88" evidence="1"/>
<dbReference type="EMBL" id="AE016828">
    <property type="protein sequence ID" value="AAO91370.1"/>
    <property type="molecule type" value="Genomic_DNA"/>
</dbReference>
<dbReference type="RefSeq" id="NP_820856.1">
    <property type="nucleotide sequence ID" value="NC_002971.3"/>
</dbReference>
<dbReference type="RefSeq" id="WP_010958511.1">
    <property type="nucleotide sequence ID" value="NC_002971.4"/>
</dbReference>
<dbReference type="SMR" id="Q83AK6"/>
<dbReference type="STRING" id="227377.CBU_1879"/>
<dbReference type="EnsemblBacteria" id="AAO91370">
    <property type="protein sequence ID" value="AAO91370"/>
    <property type="gene ID" value="CBU_1879"/>
</dbReference>
<dbReference type="GeneID" id="1209792"/>
<dbReference type="KEGG" id="cbu:CBU_1879"/>
<dbReference type="PATRIC" id="fig|227377.7.peg.1861"/>
<dbReference type="eggNOG" id="COG0242">
    <property type="taxonomic scope" value="Bacteria"/>
</dbReference>
<dbReference type="HOGENOM" id="CLU_061901_5_2_6"/>
<dbReference type="OrthoDB" id="9804313at2"/>
<dbReference type="Proteomes" id="UP000002671">
    <property type="component" value="Chromosome"/>
</dbReference>
<dbReference type="GO" id="GO:0046872">
    <property type="term" value="F:metal ion binding"/>
    <property type="evidence" value="ECO:0007669"/>
    <property type="project" value="UniProtKB-KW"/>
</dbReference>
<dbReference type="GO" id="GO:0042586">
    <property type="term" value="F:peptide deformylase activity"/>
    <property type="evidence" value="ECO:0000318"/>
    <property type="project" value="GO_Central"/>
</dbReference>
<dbReference type="GO" id="GO:0043686">
    <property type="term" value="P:co-translational protein modification"/>
    <property type="evidence" value="ECO:0000318"/>
    <property type="project" value="GO_Central"/>
</dbReference>
<dbReference type="GO" id="GO:0006412">
    <property type="term" value="P:translation"/>
    <property type="evidence" value="ECO:0007669"/>
    <property type="project" value="UniProtKB-UniRule"/>
</dbReference>
<dbReference type="CDD" id="cd00487">
    <property type="entry name" value="Pep_deformylase"/>
    <property type="match status" value="1"/>
</dbReference>
<dbReference type="Gene3D" id="3.90.45.10">
    <property type="entry name" value="Peptide deformylase"/>
    <property type="match status" value="1"/>
</dbReference>
<dbReference type="HAMAP" id="MF_00163">
    <property type="entry name" value="Pep_deformylase"/>
    <property type="match status" value="1"/>
</dbReference>
<dbReference type="InterPro" id="IPR023635">
    <property type="entry name" value="Peptide_deformylase"/>
</dbReference>
<dbReference type="InterPro" id="IPR036821">
    <property type="entry name" value="Peptide_deformylase_sf"/>
</dbReference>
<dbReference type="PANTHER" id="PTHR10458">
    <property type="entry name" value="PEPTIDE DEFORMYLASE"/>
    <property type="match status" value="1"/>
</dbReference>
<dbReference type="PANTHER" id="PTHR10458:SF21">
    <property type="entry name" value="PEPTIDE DEFORMYLASE"/>
    <property type="match status" value="1"/>
</dbReference>
<dbReference type="Pfam" id="PF01327">
    <property type="entry name" value="Pep_deformylase"/>
    <property type="match status" value="1"/>
</dbReference>
<dbReference type="PIRSF" id="PIRSF004749">
    <property type="entry name" value="Pep_def"/>
    <property type="match status" value="1"/>
</dbReference>
<dbReference type="PRINTS" id="PR01576">
    <property type="entry name" value="PDEFORMYLASE"/>
</dbReference>
<dbReference type="SUPFAM" id="SSF56420">
    <property type="entry name" value="Peptide deformylase"/>
    <property type="match status" value="1"/>
</dbReference>
<name>DEF2_COXBU</name>
<comment type="function">
    <text evidence="1">Removes the formyl group from the N-terminal Met of newly synthesized proteins. Requires at least a dipeptide for an efficient rate of reaction. N-terminal L-methionine is a prerequisite for activity but the enzyme has broad specificity at other positions.</text>
</comment>
<comment type="catalytic activity">
    <reaction evidence="1">
        <text>N-terminal N-formyl-L-methionyl-[peptide] + H2O = N-terminal L-methionyl-[peptide] + formate</text>
        <dbReference type="Rhea" id="RHEA:24420"/>
        <dbReference type="Rhea" id="RHEA-COMP:10639"/>
        <dbReference type="Rhea" id="RHEA-COMP:10640"/>
        <dbReference type="ChEBI" id="CHEBI:15377"/>
        <dbReference type="ChEBI" id="CHEBI:15740"/>
        <dbReference type="ChEBI" id="CHEBI:49298"/>
        <dbReference type="ChEBI" id="CHEBI:64731"/>
        <dbReference type="EC" id="3.5.1.88"/>
    </reaction>
</comment>
<comment type="cofactor">
    <cofactor evidence="1">
        <name>Fe(2+)</name>
        <dbReference type="ChEBI" id="CHEBI:29033"/>
    </cofactor>
    <text evidence="1">Binds 1 Fe(2+) ion.</text>
</comment>
<comment type="similarity">
    <text evidence="1">Belongs to the polypeptide deformylase family.</text>
</comment>
<evidence type="ECO:0000255" key="1">
    <source>
        <dbReference type="HAMAP-Rule" id="MF_00163"/>
    </source>
</evidence>
<feature type="chain" id="PRO_0000082777" description="Peptide deformylase 2">
    <location>
        <begin position="1"/>
        <end position="209"/>
    </location>
</feature>
<feature type="active site" evidence="1">
    <location>
        <position position="150"/>
    </location>
</feature>
<feature type="binding site" evidence="1">
    <location>
        <position position="101"/>
    </location>
    <ligand>
        <name>Fe cation</name>
        <dbReference type="ChEBI" id="CHEBI:24875"/>
    </ligand>
</feature>
<feature type="binding site" evidence="1">
    <location>
        <position position="149"/>
    </location>
    <ligand>
        <name>Fe cation</name>
        <dbReference type="ChEBI" id="CHEBI:24875"/>
    </ligand>
</feature>
<feature type="binding site" evidence="1">
    <location>
        <position position="153"/>
    </location>
    <ligand>
        <name>Fe cation</name>
        <dbReference type="ChEBI" id="CHEBI:24875"/>
    </ligand>
</feature>
<keyword id="KW-0378">Hydrolase</keyword>
<keyword id="KW-0408">Iron</keyword>
<keyword id="KW-0479">Metal-binding</keyword>
<keyword id="KW-0648">Protein biosynthesis</keyword>
<keyword id="KW-1185">Reference proteome</keyword>
<accession>Q83AK6</accession>
<reference key="1">
    <citation type="journal article" date="2003" name="Proc. Natl. Acad. Sci. U.S.A.">
        <title>Complete genome sequence of the Q-fever pathogen, Coxiella burnetii.</title>
        <authorList>
            <person name="Seshadri R."/>
            <person name="Paulsen I.T."/>
            <person name="Eisen J.A."/>
            <person name="Read T.D."/>
            <person name="Nelson K.E."/>
            <person name="Nelson W.C."/>
            <person name="Ward N.L."/>
            <person name="Tettelin H."/>
            <person name="Davidsen T.M."/>
            <person name="Beanan M.J."/>
            <person name="DeBoy R.T."/>
            <person name="Daugherty S.C."/>
            <person name="Brinkac L.M."/>
            <person name="Madupu R."/>
            <person name="Dodson R.J."/>
            <person name="Khouri H.M."/>
            <person name="Lee K.H."/>
            <person name="Carty H.A."/>
            <person name="Scanlan D."/>
            <person name="Heinzen R.A."/>
            <person name="Thompson H.A."/>
            <person name="Samuel J.E."/>
            <person name="Fraser C.M."/>
            <person name="Heidelberg J.F."/>
        </authorList>
    </citation>
    <scope>NUCLEOTIDE SEQUENCE [LARGE SCALE GENOMIC DNA]</scope>
    <source>
        <strain>RSA 493 / Nine Mile phase I</strain>
    </source>
</reference>